<name>SYK_STRPN</name>
<evidence type="ECO:0000255" key="1">
    <source>
        <dbReference type="HAMAP-Rule" id="MF_00252"/>
    </source>
</evidence>
<evidence type="ECO:0000305" key="2"/>
<gene>
    <name evidence="1" type="primary">lysS</name>
    <name type="ordered locus">SP_0713</name>
</gene>
<protein>
    <recommendedName>
        <fullName evidence="1">Lysine--tRNA ligase</fullName>
        <ecNumber evidence="1">6.1.1.6</ecNumber>
    </recommendedName>
    <alternativeName>
        <fullName evidence="1">Lysyl-tRNA synthetase</fullName>
        <shortName evidence="1">LysRS</shortName>
    </alternativeName>
</protein>
<reference key="1">
    <citation type="journal article" date="2001" name="Science">
        <title>Complete genome sequence of a virulent isolate of Streptococcus pneumoniae.</title>
        <authorList>
            <person name="Tettelin H."/>
            <person name="Nelson K.E."/>
            <person name="Paulsen I.T."/>
            <person name="Eisen J.A."/>
            <person name="Read T.D."/>
            <person name="Peterson S.N."/>
            <person name="Heidelberg J.F."/>
            <person name="DeBoy R.T."/>
            <person name="Haft D.H."/>
            <person name="Dodson R.J."/>
            <person name="Durkin A.S."/>
            <person name="Gwinn M.L."/>
            <person name="Kolonay J.F."/>
            <person name="Nelson W.C."/>
            <person name="Peterson J.D."/>
            <person name="Umayam L.A."/>
            <person name="White O."/>
            <person name="Salzberg S.L."/>
            <person name="Lewis M.R."/>
            <person name="Radune D."/>
            <person name="Holtzapple E.K."/>
            <person name="Khouri H.M."/>
            <person name="Wolf A.M."/>
            <person name="Utterback T.R."/>
            <person name="Hansen C.L."/>
            <person name="McDonald L.A."/>
            <person name="Feldblyum T.V."/>
            <person name="Angiuoli S.V."/>
            <person name="Dickinson T."/>
            <person name="Hickey E.K."/>
            <person name="Holt I.E."/>
            <person name="Loftus B.J."/>
            <person name="Yang F."/>
            <person name="Smith H.O."/>
            <person name="Venter J.C."/>
            <person name="Dougherty B.A."/>
            <person name="Morrison D.A."/>
            <person name="Hollingshead S.K."/>
            <person name="Fraser C.M."/>
        </authorList>
    </citation>
    <scope>NUCLEOTIDE SEQUENCE [LARGE SCALE GENOMIC DNA]</scope>
    <source>
        <strain>ATCC BAA-334 / TIGR4</strain>
    </source>
</reference>
<sequence>MSTEHMEELNDQQIVRREKMAALREQGIDPFGKRFERTANSQELKDKYANLDKEQLHDKNETATIAGRLITKRGKGKVGFAHLQDREGQIQIYVRKDAVGEENYEIFKKADLGDFLGVEGEVMRTDMGELSIKATHITHLSKALRPLPEKFHGLTDVETIYRKRYLDLISNRESFERFVTRSKIISEIRRYLDQKGFLEVETPVLHNEAGGAAARPFITHHNAQNIDMVLRIATELHLKRLIVGGMERVYEIGRIFRNEGMDATHNPEFTSIEVYQAYADFQDIMDLTEGIIQHAAKSVKGDGPVNYQGTEIKINEPFKRVHMVDAIREITGVDFWQDMTLEEAKAIAAEKKVPVEKHYTEVGHIINAFFEEFVEETLIQPTFVYGHPVAVSPLAKKNPEDQRFTDRFELFIMTKEYGNAFTELNDPIDQLSRFEAQAKAKELGDDEATGIDYDYIEALEYGMPPTGGLGIGIDRLCMLLTDTTTIRDVLLFPTMK</sequence>
<accession>Q97RS9</accession>
<keyword id="KW-0030">Aminoacyl-tRNA synthetase</keyword>
<keyword id="KW-0067">ATP-binding</keyword>
<keyword id="KW-0963">Cytoplasm</keyword>
<keyword id="KW-0436">Ligase</keyword>
<keyword id="KW-0460">Magnesium</keyword>
<keyword id="KW-0479">Metal-binding</keyword>
<keyword id="KW-0547">Nucleotide-binding</keyword>
<keyword id="KW-0648">Protein biosynthesis</keyword>
<keyword id="KW-1185">Reference proteome</keyword>
<feature type="chain" id="PRO_0000152687" description="Lysine--tRNA ligase">
    <location>
        <begin position="1"/>
        <end position="496"/>
    </location>
</feature>
<feature type="binding site" evidence="1">
    <location>
        <position position="409"/>
    </location>
    <ligand>
        <name>Mg(2+)</name>
        <dbReference type="ChEBI" id="CHEBI:18420"/>
        <label>1</label>
    </ligand>
</feature>
<feature type="binding site" evidence="1">
    <location>
        <position position="416"/>
    </location>
    <ligand>
        <name>Mg(2+)</name>
        <dbReference type="ChEBI" id="CHEBI:18420"/>
        <label>1</label>
    </ligand>
</feature>
<feature type="binding site" evidence="1">
    <location>
        <position position="416"/>
    </location>
    <ligand>
        <name>Mg(2+)</name>
        <dbReference type="ChEBI" id="CHEBI:18420"/>
        <label>2</label>
    </ligand>
</feature>
<proteinExistence type="evidence at protein level"/>
<organism>
    <name type="scientific">Streptococcus pneumoniae serotype 4 (strain ATCC BAA-334 / TIGR4)</name>
    <dbReference type="NCBI Taxonomy" id="170187"/>
    <lineage>
        <taxon>Bacteria</taxon>
        <taxon>Bacillati</taxon>
        <taxon>Bacillota</taxon>
        <taxon>Bacilli</taxon>
        <taxon>Lactobacillales</taxon>
        <taxon>Streptococcaceae</taxon>
        <taxon>Streptococcus</taxon>
    </lineage>
</organism>
<dbReference type="EC" id="6.1.1.6" evidence="1"/>
<dbReference type="EMBL" id="AE005672">
    <property type="protein sequence ID" value="AAK74854.1"/>
    <property type="status" value="ALT_INIT"/>
    <property type="molecule type" value="Genomic_DNA"/>
</dbReference>
<dbReference type="PIR" id="E95082">
    <property type="entry name" value="E95082"/>
</dbReference>
<dbReference type="RefSeq" id="WP_000102456.1">
    <property type="nucleotide sequence ID" value="NZ_CP155539.1"/>
</dbReference>
<dbReference type="SMR" id="Q97RS9"/>
<dbReference type="IntAct" id="Q97RS9">
    <property type="interactions" value="5"/>
</dbReference>
<dbReference type="PaxDb" id="170187-SP_0713"/>
<dbReference type="EnsemblBacteria" id="AAK74854">
    <property type="protein sequence ID" value="AAK74854"/>
    <property type="gene ID" value="SP_0713"/>
</dbReference>
<dbReference type="GeneID" id="45653906"/>
<dbReference type="KEGG" id="spn:SP_0713"/>
<dbReference type="eggNOG" id="COG1190">
    <property type="taxonomic scope" value="Bacteria"/>
</dbReference>
<dbReference type="PhylomeDB" id="Q97RS9"/>
<dbReference type="BioCyc" id="SPNE170187:G1FZB-731-MONOMER"/>
<dbReference type="Proteomes" id="UP000000585">
    <property type="component" value="Chromosome"/>
</dbReference>
<dbReference type="GO" id="GO:0005829">
    <property type="term" value="C:cytosol"/>
    <property type="evidence" value="ECO:0007669"/>
    <property type="project" value="TreeGrafter"/>
</dbReference>
<dbReference type="GO" id="GO:0005524">
    <property type="term" value="F:ATP binding"/>
    <property type="evidence" value="ECO:0007669"/>
    <property type="project" value="UniProtKB-UniRule"/>
</dbReference>
<dbReference type="GO" id="GO:0140096">
    <property type="term" value="F:catalytic activity, acting on a protein"/>
    <property type="evidence" value="ECO:0007669"/>
    <property type="project" value="UniProtKB-ARBA"/>
</dbReference>
<dbReference type="GO" id="GO:0004824">
    <property type="term" value="F:lysine-tRNA ligase activity"/>
    <property type="evidence" value="ECO:0007669"/>
    <property type="project" value="UniProtKB-UniRule"/>
</dbReference>
<dbReference type="GO" id="GO:0000287">
    <property type="term" value="F:magnesium ion binding"/>
    <property type="evidence" value="ECO:0007669"/>
    <property type="project" value="UniProtKB-UniRule"/>
</dbReference>
<dbReference type="GO" id="GO:0016740">
    <property type="term" value="F:transferase activity"/>
    <property type="evidence" value="ECO:0007669"/>
    <property type="project" value="UniProtKB-ARBA"/>
</dbReference>
<dbReference type="GO" id="GO:0000049">
    <property type="term" value="F:tRNA binding"/>
    <property type="evidence" value="ECO:0007669"/>
    <property type="project" value="TreeGrafter"/>
</dbReference>
<dbReference type="GO" id="GO:0006430">
    <property type="term" value="P:lysyl-tRNA aminoacylation"/>
    <property type="evidence" value="ECO:0007669"/>
    <property type="project" value="UniProtKB-UniRule"/>
</dbReference>
<dbReference type="CDD" id="cd00775">
    <property type="entry name" value="LysRS_core"/>
    <property type="match status" value="1"/>
</dbReference>
<dbReference type="CDD" id="cd04322">
    <property type="entry name" value="LysRS_N"/>
    <property type="match status" value="1"/>
</dbReference>
<dbReference type="FunFam" id="2.40.50.140:FF:000024">
    <property type="entry name" value="Lysine--tRNA ligase"/>
    <property type="match status" value="1"/>
</dbReference>
<dbReference type="FunFam" id="3.30.930.10:FF:000001">
    <property type="entry name" value="Lysine--tRNA ligase"/>
    <property type="match status" value="1"/>
</dbReference>
<dbReference type="Gene3D" id="3.30.930.10">
    <property type="entry name" value="Bira Bifunctional Protein, Domain 2"/>
    <property type="match status" value="1"/>
</dbReference>
<dbReference type="Gene3D" id="2.40.50.140">
    <property type="entry name" value="Nucleic acid-binding proteins"/>
    <property type="match status" value="1"/>
</dbReference>
<dbReference type="HAMAP" id="MF_00252">
    <property type="entry name" value="Lys_tRNA_synth_class2"/>
    <property type="match status" value="1"/>
</dbReference>
<dbReference type="InterPro" id="IPR004364">
    <property type="entry name" value="Aa-tRNA-synt_II"/>
</dbReference>
<dbReference type="InterPro" id="IPR006195">
    <property type="entry name" value="aa-tRNA-synth_II"/>
</dbReference>
<dbReference type="InterPro" id="IPR045864">
    <property type="entry name" value="aa-tRNA-synth_II/BPL/LPL"/>
</dbReference>
<dbReference type="InterPro" id="IPR002313">
    <property type="entry name" value="Lys-tRNA-ligase_II"/>
</dbReference>
<dbReference type="InterPro" id="IPR034762">
    <property type="entry name" value="Lys-tRNA-ligase_II_bac/euk"/>
</dbReference>
<dbReference type="InterPro" id="IPR044136">
    <property type="entry name" value="Lys-tRNA-ligase_II_N"/>
</dbReference>
<dbReference type="InterPro" id="IPR018149">
    <property type="entry name" value="Lys-tRNA-synth_II_C"/>
</dbReference>
<dbReference type="InterPro" id="IPR012340">
    <property type="entry name" value="NA-bd_OB-fold"/>
</dbReference>
<dbReference type="InterPro" id="IPR004365">
    <property type="entry name" value="NA-bd_OB_tRNA"/>
</dbReference>
<dbReference type="NCBIfam" id="TIGR00499">
    <property type="entry name" value="lysS_bact"/>
    <property type="match status" value="1"/>
</dbReference>
<dbReference type="NCBIfam" id="NF001756">
    <property type="entry name" value="PRK00484.1"/>
    <property type="match status" value="1"/>
</dbReference>
<dbReference type="PANTHER" id="PTHR42918:SF15">
    <property type="entry name" value="LYSINE--TRNA LIGASE, CHLOROPLASTIC_MITOCHONDRIAL"/>
    <property type="match status" value="1"/>
</dbReference>
<dbReference type="PANTHER" id="PTHR42918">
    <property type="entry name" value="LYSYL-TRNA SYNTHETASE"/>
    <property type="match status" value="1"/>
</dbReference>
<dbReference type="Pfam" id="PF00152">
    <property type="entry name" value="tRNA-synt_2"/>
    <property type="match status" value="1"/>
</dbReference>
<dbReference type="Pfam" id="PF01336">
    <property type="entry name" value="tRNA_anti-codon"/>
    <property type="match status" value="1"/>
</dbReference>
<dbReference type="PIRSF" id="PIRSF039101">
    <property type="entry name" value="LysRS2"/>
    <property type="match status" value="1"/>
</dbReference>
<dbReference type="PRINTS" id="PR00982">
    <property type="entry name" value="TRNASYNTHLYS"/>
</dbReference>
<dbReference type="SUPFAM" id="SSF55681">
    <property type="entry name" value="Class II aaRS and biotin synthetases"/>
    <property type="match status" value="1"/>
</dbReference>
<dbReference type="SUPFAM" id="SSF50249">
    <property type="entry name" value="Nucleic acid-binding proteins"/>
    <property type="match status" value="1"/>
</dbReference>
<dbReference type="PROSITE" id="PS50862">
    <property type="entry name" value="AA_TRNA_LIGASE_II"/>
    <property type="match status" value="1"/>
</dbReference>
<comment type="catalytic activity">
    <reaction evidence="1">
        <text>tRNA(Lys) + L-lysine + ATP = L-lysyl-tRNA(Lys) + AMP + diphosphate</text>
        <dbReference type="Rhea" id="RHEA:20792"/>
        <dbReference type="Rhea" id="RHEA-COMP:9696"/>
        <dbReference type="Rhea" id="RHEA-COMP:9697"/>
        <dbReference type="ChEBI" id="CHEBI:30616"/>
        <dbReference type="ChEBI" id="CHEBI:32551"/>
        <dbReference type="ChEBI" id="CHEBI:33019"/>
        <dbReference type="ChEBI" id="CHEBI:78442"/>
        <dbReference type="ChEBI" id="CHEBI:78529"/>
        <dbReference type="ChEBI" id="CHEBI:456215"/>
        <dbReference type="EC" id="6.1.1.6"/>
    </reaction>
</comment>
<comment type="cofactor">
    <cofactor evidence="1">
        <name>Mg(2+)</name>
        <dbReference type="ChEBI" id="CHEBI:18420"/>
    </cofactor>
    <text evidence="1">Binds 3 Mg(2+) ions per subunit.</text>
</comment>
<comment type="subunit">
    <text evidence="1">Homodimer.</text>
</comment>
<comment type="interaction">
    <interactant intactId="EBI-2207121">
        <id>Q97RS9</id>
    </interactant>
    <interactant intactId="EBI-2207206">
        <id>Q97QS2</id>
        <label>eno</label>
    </interactant>
    <organismsDiffer>false</organismsDiffer>
    <experiments>3</experiments>
</comment>
<comment type="interaction">
    <interactant intactId="EBI-2207121">
        <id>Q97RS9</id>
    </interactant>
    <interactant intactId="EBI-2207053">
        <id>Q97SE5</id>
        <label>gatC</label>
    </interactant>
    <organismsDiffer>false</organismsDiffer>
    <experiments>2</experiments>
</comment>
<comment type="interaction">
    <interactant intactId="EBI-2207121">
        <id>Q97RS9</id>
    </interactant>
    <interactant intactId="EBI-2206949">
        <id>Q97NV3</id>
        <label>groES</label>
    </interactant>
    <organismsDiffer>false</organismsDiffer>
    <experiments>2</experiments>
</comment>
<comment type="subcellular location">
    <subcellularLocation>
        <location evidence="1">Cytoplasm</location>
    </subcellularLocation>
</comment>
<comment type="similarity">
    <text evidence="1">Belongs to the class-II aminoacyl-tRNA synthetase family.</text>
</comment>
<comment type="sequence caution" evidence="2">
    <conflict type="erroneous initiation">
        <sequence resource="EMBL-CDS" id="AAK74854"/>
    </conflict>
</comment>